<feature type="initiator methionine" description="Removed" evidence="3">
    <location>
        <position position="1"/>
    </location>
</feature>
<feature type="chain" id="PRO_0000238692" description="Histone H2B.5">
    <location>
        <begin position="2"/>
        <end position="126"/>
    </location>
</feature>
<feature type="region of interest" description="Disordered" evidence="5">
    <location>
        <begin position="1"/>
        <end position="34"/>
    </location>
</feature>
<feature type="compositionally biased region" description="Basic and acidic residues" evidence="5">
    <location>
        <begin position="1"/>
        <end position="27"/>
    </location>
</feature>
<feature type="modified residue" description="N,N,N-trimethylalanine; alternate" evidence="3">
    <location>
        <position position="2"/>
    </location>
</feature>
<feature type="modified residue" description="N,N-dimethylalanine; alternate" evidence="3">
    <location>
        <position position="2"/>
    </location>
</feature>
<feature type="modified residue" description="N-methylalanine; alternate" evidence="3">
    <location>
        <position position="2"/>
    </location>
</feature>
<feature type="modified residue" description="N6-methyllysine" evidence="4">
    <location>
        <position position="4"/>
    </location>
</feature>
<feature type="modified residue" description="N6-acetyllysine" evidence="2">
    <location>
        <position position="7"/>
    </location>
</feature>
<feature type="modified residue" description="N6-acetyllysine" evidence="2">
    <location>
        <position position="12"/>
    </location>
</feature>
<feature type="modified residue" description="N6-acetyllysine" evidence="3">
    <location>
        <position position="18"/>
    </location>
</feature>
<feature type="modified residue" description="N6-acetyllysine" evidence="3">
    <location>
        <position position="19"/>
    </location>
</feature>
<feature type="cross-link" description="Glycyl lysine isopeptide (Lys-Gly) (interchain with G-Cter in ubiquitin)" evidence="3">
    <location>
        <position position="122"/>
    </location>
</feature>
<evidence type="ECO:0000250" key="1"/>
<evidence type="ECO:0000250" key="2">
    <source>
        <dbReference type="UniProtKB" id="O23629"/>
    </source>
</evidence>
<evidence type="ECO:0000250" key="3">
    <source>
        <dbReference type="UniProtKB" id="Q9LQQ4"/>
    </source>
</evidence>
<evidence type="ECO:0000250" key="4">
    <source>
        <dbReference type="UniProtKB" id="Q9LZT0"/>
    </source>
</evidence>
<evidence type="ECO:0000256" key="5">
    <source>
        <dbReference type="SAM" id="MobiDB-lite"/>
    </source>
</evidence>
<evidence type="ECO:0000305" key="6"/>
<comment type="function">
    <text>Core component of nucleosome. Nucleosomes wrap and compact DNA into chromatin, limiting DNA accessibility to the cellular machineries which require DNA as a template. Histones thereby play a central role in transcription regulation, DNA repair, DNA replication and chromosomal stability. DNA accessibility is regulated via a complex set of post-translational modifications of histones, also called histone code, and nucleosome remodeling.</text>
</comment>
<comment type="subunit">
    <text>The nucleosome is a histone octamer containing two molecules each of H2A, H2B, H3 and H4 assembled in one H3-H4 heterotetramer and two H2A-H2B heterodimers. The octamer wraps approximately 147 bp of DNA.</text>
</comment>
<comment type="subcellular location">
    <subcellularLocation>
        <location evidence="1">Nucleus</location>
    </subcellularLocation>
    <subcellularLocation>
        <location evidence="1">Chromosome</location>
    </subcellularLocation>
</comment>
<comment type="PTM">
    <text evidence="1">Can be acetylated to form H2BK6ac, H2BK33ac and H2BK34ac.</text>
</comment>
<comment type="PTM">
    <text>Monoubiquitinated by BRE1 to form H2BK143ub1 and deubiquitinated by UBP26. Required for heterochromatic histone H3 di- and trimethylation at H3K4me. May give a specific tag for epigenetic transcriptional activation.</text>
</comment>
<comment type="similarity">
    <text evidence="6">Belongs to the histone H2B family.</text>
</comment>
<comment type="caution">
    <text evidence="6">To ensure consistency between histone entries, we follow the 'Brno' nomenclature for histone modifications, with positions referring to those used in the literature for the 'closest' model organism. Due to slight variations in histone sequences between organisms and to the presence of initiator methionine in UniProtKB/Swiss-Prot sequences, the actual positions of modified amino acids in the sequence generally differ. In this entry the following conventions are used: H2BK6ac = acetylated Lys-7; H2BK33ac = acetylated Lys-18; H2BK34ac = acetylated Lys-19; H2BK143ub1 = monoubiquitinated Lys-122.</text>
</comment>
<organism>
    <name type="scientific">Arabidopsis thaliana</name>
    <name type="common">Mouse-ear cress</name>
    <dbReference type="NCBI Taxonomy" id="3702"/>
    <lineage>
        <taxon>Eukaryota</taxon>
        <taxon>Viridiplantae</taxon>
        <taxon>Streptophyta</taxon>
        <taxon>Embryophyta</taxon>
        <taxon>Tracheophyta</taxon>
        <taxon>Spermatophyta</taxon>
        <taxon>Magnoliopsida</taxon>
        <taxon>eudicotyledons</taxon>
        <taxon>Gunneridae</taxon>
        <taxon>Pentapetalae</taxon>
        <taxon>rosids</taxon>
        <taxon>malvids</taxon>
        <taxon>Brassicales</taxon>
        <taxon>Brassicaceae</taxon>
        <taxon>Camelineae</taxon>
        <taxon>Arabidopsis</taxon>
    </lineage>
</organism>
<gene>
    <name type="ordered locus">At3g09480</name>
    <name type="ORF">F11F8.5</name>
</gene>
<protein>
    <recommendedName>
        <fullName>Histone H2B.5</fullName>
    </recommendedName>
    <alternativeName>
        <fullName>HTB7</fullName>
    </alternativeName>
</protein>
<sequence>MAPKAEKKPSEKAPKADKKITKEGGSERKKKTKKSTETYKIYLFKVLKQVHPDIGISGKAMGIMNSFINDTFEKIALESSRLARYNKKPTITSREIQTAVRLVLPGELAKHAVSEGTKAVTKFTSS</sequence>
<accession>Q9SF55</accession>
<keyword id="KW-0007">Acetylation</keyword>
<keyword id="KW-0158">Chromosome</keyword>
<keyword id="KW-0238">DNA-binding</keyword>
<keyword id="KW-1017">Isopeptide bond</keyword>
<keyword id="KW-0488">Methylation</keyword>
<keyword id="KW-0544">Nucleosome core</keyword>
<keyword id="KW-0539">Nucleus</keyword>
<keyword id="KW-1185">Reference proteome</keyword>
<keyword id="KW-0832">Ubl conjugation</keyword>
<proteinExistence type="evidence at protein level"/>
<reference key="1">
    <citation type="journal article" date="2000" name="Nature">
        <title>Sequence and analysis of chromosome 3 of the plant Arabidopsis thaliana.</title>
        <authorList>
            <person name="Salanoubat M."/>
            <person name="Lemcke K."/>
            <person name="Rieger M."/>
            <person name="Ansorge W."/>
            <person name="Unseld M."/>
            <person name="Fartmann B."/>
            <person name="Valle G."/>
            <person name="Bloecker H."/>
            <person name="Perez-Alonso M."/>
            <person name="Obermaier B."/>
            <person name="Delseny M."/>
            <person name="Boutry M."/>
            <person name="Grivell L.A."/>
            <person name="Mache R."/>
            <person name="Puigdomenech P."/>
            <person name="De Simone V."/>
            <person name="Choisne N."/>
            <person name="Artiguenave F."/>
            <person name="Robert C."/>
            <person name="Brottier P."/>
            <person name="Wincker P."/>
            <person name="Cattolico L."/>
            <person name="Weissenbach J."/>
            <person name="Saurin W."/>
            <person name="Quetier F."/>
            <person name="Schaefer M."/>
            <person name="Mueller-Auer S."/>
            <person name="Gabel C."/>
            <person name="Fuchs M."/>
            <person name="Benes V."/>
            <person name="Wurmbach E."/>
            <person name="Drzonek H."/>
            <person name="Erfle H."/>
            <person name="Jordan N."/>
            <person name="Bangert S."/>
            <person name="Wiedelmann R."/>
            <person name="Kranz H."/>
            <person name="Voss H."/>
            <person name="Holland R."/>
            <person name="Brandt P."/>
            <person name="Nyakatura G."/>
            <person name="Vezzi A."/>
            <person name="D'Angelo M."/>
            <person name="Pallavicini A."/>
            <person name="Toppo S."/>
            <person name="Simionati B."/>
            <person name="Conrad A."/>
            <person name="Hornischer K."/>
            <person name="Kauer G."/>
            <person name="Loehnert T.-H."/>
            <person name="Nordsiek G."/>
            <person name="Reichelt J."/>
            <person name="Scharfe M."/>
            <person name="Schoen O."/>
            <person name="Bargues M."/>
            <person name="Terol J."/>
            <person name="Climent J."/>
            <person name="Navarro P."/>
            <person name="Collado C."/>
            <person name="Perez-Perez A."/>
            <person name="Ottenwaelder B."/>
            <person name="Duchemin D."/>
            <person name="Cooke R."/>
            <person name="Laudie M."/>
            <person name="Berger-Llauro C."/>
            <person name="Purnelle B."/>
            <person name="Masuy D."/>
            <person name="de Haan M."/>
            <person name="Maarse A.C."/>
            <person name="Alcaraz J.-P."/>
            <person name="Cottet A."/>
            <person name="Casacuberta E."/>
            <person name="Monfort A."/>
            <person name="Argiriou A."/>
            <person name="Flores M."/>
            <person name="Liguori R."/>
            <person name="Vitale D."/>
            <person name="Mannhaupt G."/>
            <person name="Haase D."/>
            <person name="Schoof H."/>
            <person name="Rudd S."/>
            <person name="Zaccaria P."/>
            <person name="Mewes H.-W."/>
            <person name="Mayer K.F.X."/>
            <person name="Kaul S."/>
            <person name="Town C.D."/>
            <person name="Koo H.L."/>
            <person name="Tallon L.J."/>
            <person name="Jenkins J."/>
            <person name="Rooney T."/>
            <person name="Rizzo M."/>
            <person name="Walts A."/>
            <person name="Utterback T."/>
            <person name="Fujii C.Y."/>
            <person name="Shea T.P."/>
            <person name="Creasy T.H."/>
            <person name="Haas B."/>
            <person name="Maiti R."/>
            <person name="Wu D."/>
            <person name="Peterson J."/>
            <person name="Van Aken S."/>
            <person name="Pai G."/>
            <person name="Militscher J."/>
            <person name="Sellers P."/>
            <person name="Gill J.E."/>
            <person name="Feldblyum T.V."/>
            <person name="Preuss D."/>
            <person name="Lin X."/>
            <person name="Nierman W.C."/>
            <person name="Salzberg S.L."/>
            <person name="White O."/>
            <person name="Venter J.C."/>
            <person name="Fraser C.M."/>
            <person name="Kaneko T."/>
            <person name="Nakamura Y."/>
            <person name="Sato S."/>
            <person name="Kato T."/>
            <person name="Asamizu E."/>
            <person name="Sasamoto S."/>
            <person name="Kimura T."/>
            <person name="Idesawa K."/>
            <person name="Kawashima K."/>
            <person name="Kishida Y."/>
            <person name="Kiyokawa C."/>
            <person name="Kohara M."/>
            <person name="Matsumoto M."/>
            <person name="Matsuno A."/>
            <person name="Muraki A."/>
            <person name="Nakayama S."/>
            <person name="Nakazaki N."/>
            <person name="Shinpo S."/>
            <person name="Takeuchi C."/>
            <person name="Wada T."/>
            <person name="Watanabe A."/>
            <person name="Yamada M."/>
            <person name="Yasuda M."/>
            <person name="Tabata S."/>
        </authorList>
    </citation>
    <scope>NUCLEOTIDE SEQUENCE [LARGE SCALE GENOMIC DNA]</scope>
    <source>
        <strain>cv. Columbia</strain>
    </source>
</reference>
<reference key="2">
    <citation type="journal article" date="2017" name="Plant J.">
        <title>Araport11: a complete reannotation of the Arabidopsis thaliana reference genome.</title>
        <authorList>
            <person name="Cheng C.Y."/>
            <person name="Krishnakumar V."/>
            <person name="Chan A.P."/>
            <person name="Thibaud-Nissen F."/>
            <person name="Schobel S."/>
            <person name="Town C.D."/>
        </authorList>
    </citation>
    <scope>GENOME REANNOTATION</scope>
    <source>
        <strain>cv. Columbia</strain>
    </source>
</reference>
<reference key="3">
    <citation type="journal article" date="2003" name="Science">
        <title>Empirical analysis of transcriptional activity in the Arabidopsis genome.</title>
        <authorList>
            <person name="Yamada K."/>
            <person name="Lim J."/>
            <person name="Dale J.M."/>
            <person name="Chen H."/>
            <person name="Shinn P."/>
            <person name="Palm C.J."/>
            <person name="Southwick A.M."/>
            <person name="Wu H.C."/>
            <person name="Kim C.J."/>
            <person name="Nguyen M."/>
            <person name="Pham P.K."/>
            <person name="Cheuk R.F."/>
            <person name="Karlin-Newmann G."/>
            <person name="Liu S.X."/>
            <person name="Lam B."/>
            <person name="Sakano H."/>
            <person name="Wu T."/>
            <person name="Yu G."/>
            <person name="Miranda M."/>
            <person name="Quach H.L."/>
            <person name="Tripp M."/>
            <person name="Chang C.H."/>
            <person name="Lee J.M."/>
            <person name="Toriumi M.J."/>
            <person name="Chan M.M."/>
            <person name="Tang C.C."/>
            <person name="Onodera C.S."/>
            <person name="Deng J.M."/>
            <person name="Akiyama K."/>
            <person name="Ansari Y."/>
            <person name="Arakawa T."/>
            <person name="Banh J."/>
            <person name="Banno F."/>
            <person name="Bowser L."/>
            <person name="Brooks S.Y."/>
            <person name="Carninci P."/>
            <person name="Chao Q."/>
            <person name="Choy N."/>
            <person name="Enju A."/>
            <person name="Goldsmith A.D."/>
            <person name="Gurjal M."/>
            <person name="Hansen N.F."/>
            <person name="Hayashizaki Y."/>
            <person name="Johnson-Hopson C."/>
            <person name="Hsuan V.W."/>
            <person name="Iida K."/>
            <person name="Karnes M."/>
            <person name="Khan S."/>
            <person name="Koesema E."/>
            <person name="Ishida J."/>
            <person name="Jiang P.X."/>
            <person name="Jones T."/>
            <person name="Kawai J."/>
            <person name="Kamiya A."/>
            <person name="Meyers C."/>
            <person name="Nakajima M."/>
            <person name="Narusaka M."/>
            <person name="Seki M."/>
            <person name="Sakurai T."/>
            <person name="Satou M."/>
            <person name="Tamse R."/>
            <person name="Vaysberg M."/>
            <person name="Wallender E.K."/>
            <person name="Wong C."/>
            <person name="Yamamura Y."/>
            <person name="Yuan S."/>
            <person name="Shinozaki K."/>
            <person name="Davis R.W."/>
            <person name="Theologis A."/>
            <person name="Ecker J.R."/>
        </authorList>
    </citation>
    <scope>NUCLEOTIDE SEQUENCE [LARGE SCALE MRNA]</scope>
    <source>
        <strain>cv. Columbia</strain>
    </source>
</reference>
<reference key="4">
    <citation type="submission" date="2004-09" db="EMBL/GenBank/DDBJ databases">
        <title>Large-scale analysis of RIKEN Arabidopsis full-length (RAFL) cDNAs.</title>
        <authorList>
            <person name="Totoki Y."/>
            <person name="Seki M."/>
            <person name="Ishida J."/>
            <person name="Nakajima M."/>
            <person name="Enju A."/>
            <person name="Kamiya A."/>
            <person name="Narusaka M."/>
            <person name="Shin-i T."/>
            <person name="Nakagawa M."/>
            <person name="Sakamoto N."/>
            <person name="Oishi K."/>
            <person name="Kohara Y."/>
            <person name="Kobayashi M."/>
            <person name="Toyoda A."/>
            <person name="Sakaki Y."/>
            <person name="Sakurai T."/>
            <person name="Iida K."/>
            <person name="Akiyama K."/>
            <person name="Satou M."/>
            <person name="Toyoda T."/>
            <person name="Konagaya A."/>
            <person name="Carninci P."/>
            <person name="Kawai J."/>
            <person name="Hayashizaki Y."/>
            <person name="Shinozaki K."/>
        </authorList>
    </citation>
    <scope>NUCLEOTIDE SEQUENCE [LARGE SCALE MRNA]</scope>
    <source>
        <strain>cv. Columbia</strain>
    </source>
</reference>
<reference key="5">
    <citation type="journal article" date="2007" name="Nature">
        <title>Control of DNA methylation and heterochromatic silencing by histone H2B deubiquitination.</title>
        <authorList>
            <person name="Sridhar V.V."/>
            <person name="Kapoor A."/>
            <person name="Zhang K."/>
            <person name="Zhu J."/>
            <person name="Zhou T."/>
            <person name="Hasegawa P.M."/>
            <person name="Bressan R.A."/>
            <person name="Zhu J.-K."/>
        </authorList>
    </citation>
    <scope>UBIQUITINATION AT LYS-122</scope>
    <scope>IDENTIFICATION BY MASS SPECTROMETRY</scope>
</reference>
<name>H2B5_ARATH</name>
<dbReference type="EMBL" id="AC016661">
    <property type="protein sequence ID" value="AAF23280.1"/>
    <property type="molecule type" value="Genomic_DNA"/>
</dbReference>
<dbReference type="EMBL" id="CP002686">
    <property type="protein sequence ID" value="AEE74772.1"/>
    <property type="molecule type" value="Genomic_DNA"/>
</dbReference>
<dbReference type="EMBL" id="BT010498">
    <property type="protein sequence ID" value="AAQ65121.1"/>
    <property type="molecule type" value="mRNA"/>
</dbReference>
<dbReference type="EMBL" id="AK175800">
    <property type="protein sequence ID" value="BAD43563.1"/>
    <property type="molecule type" value="mRNA"/>
</dbReference>
<dbReference type="EMBL" id="AK176835">
    <property type="protein sequence ID" value="BAD44598.1"/>
    <property type="molecule type" value="mRNA"/>
</dbReference>
<dbReference type="EMBL" id="AK176003">
    <property type="protein sequence ID" value="BAD43766.1"/>
    <property type="molecule type" value="mRNA"/>
</dbReference>
<dbReference type="RefSeq" id="NP_187559.1">
    <property type="nucleotide sequence ID" value="NM_111782.3"/>
</dbReference>
<dbReference type="SMR" id="Q9SF55"/>
<dbReference type="FunCoup" id="Q9SF55">
    <property type="interactions" value="1194"/>
</dbReference>
<dbReference type="STRING" id="3702.Q9SF55"/>
<dbReference type="iPTMnet" id="Q9SF55"/>
<dbReference type="PaxDb" id="3702-AT3G09480.1"/>
<dbReference type="ProteomicsDB" id="222316"/>
<dbReference type="EnsemblPlants" id="AT3G09480.1">
    <property type="protein sequence ID" value="AT3G09480.1"/>
    <property type="gene ID" value="AT3G09480"/>
</dbReference>
<dbReference type="GeneID" id="820105"/>
<dbReference type="Gramene" id="AT3G09480.1">
    <property type="protein sequence ID" value="AT3G09480.1"/>
    <property type="gene ID" value="AT3G09480"/>
</dbReference>
<dbReference type="KEGG" id="ath:AT3G09480"/>
<dbReference type="Araport" id="AT3G09480"/>
<dbReference type="TAIR" id="AT3G09480"/>
<dbReference type="eggNOG" id="KOG1744">
    <property type="taxonomic scope" value="Eukaryota"/>
</dbReference>
<dbReference type="HOGENOM" id="CLU_075666_2_0_1"/>
<dbReference type="InParanoid" id="Q9SF55"/>
<dbReference type="OMA" id="KETYAMY"/>
<dbReference type="PhylomeDB" id="Q9SF55"/>
<dbReference type="CD-CODE" id="4299E36E">
    <property type="entry name" value="Nucleolus"/>
</dbReference>
<dbReference type="PRO" id="PR:Q9SF55"/>
<dbReference type="Proteomes" id="UP000006548">
    <property type="component" value="Chromosome 3"/>
</dbReference>
<dbReference type="ExpressionAtlas" id="Q9SF55">
    <property type="expression patterns" value="baseline and differential"/>
</dbReference>
<dbReference type="GO" id="GO:0005829">
    <property type="term" value="C:cytosol"/>
    <property type="evidence" value="ECO:0007005"/>
    <property type="project" value="TAIR"/>
</dbReference>
<dbReference type="GO" id="GO:0000786">
    <property type="term" value="C:nucleosome"/>
    <property type="evidence" value="ECO:0007669"/>
    <property type="project" value="UniProtKB-KW"/>
</dbReference>
<dbReference type="GO" id="GO:0005634">
    <property type="term" value="C:nucleus"/>
    <property type="evidence" value="ECO:0007669"/>
    <property type="project" value="UniProtKB-SubCell"/>
</dbReference>
<dbReference type="GO" id="GO:0003677">
    <property type="term" value="F:DNA binding"/>
    <property type="evidence" value="ECO:0007669"/>
    <property type="project" value="UniProtKB-KW"/>
</dbReference>
<dbReference type="GO" id="GO:0046982">
    <property type="term" value="F:protein heterodimerization activity"/>
    <property type="evidence" value="ECO:0007669"/>
    <property type="project" value="InterPro"/>
</dbReference>
<dbReference type="GO" id="GO:0030527">
    <property type="term" value="F:structural constituent of chromatin"/>
    <property type="evidence" value="ECO:0007669"/>
    <property type="project" value="InterPro"/>
</dbReference>
<dbReference type="CDD" id="cd22910">
    <property type="entry name" value="HFD_H2B"/>
    <property type="match status" value="1"/>
</dbReference>
<dbReference type="FunFam" id="1.10.20.10:FF:000014">
    <property type="entry name" value="Histone H2B"/>
    <property type="match status" value="1"/>
</dbReference>
<dbReference type="Gene3D" id="1.10.20.10">
    <property type="entry name" value="Histone, subunit A"/>
    <property type="match status" value="1"/>
</dbReference>
<dbReference type="InterPro" id="IPR009072">
    <property type="entry name" value="Histone-fold"/>
</dbReference>
<dbReference type="InterPro" id="IPR007125">
    <property type="entry name" value="Histone_H2A/H2B/H3"/>
</dbReference>
<dbReference type="InterPro" id="IPR000558">
    <property type="entry name" value="Histone_H2B"/>
</dbReference>
<dbReference type="InterPro" id="IPR055333">
    <property type="entry name" value="HISTONE_H2B_site"/>
</dbReference>
<dbReference type="PANTHER" id="PTHR23428">
    <property type="entry name" value="HISTONE H2B"/>
    <property type="match status" value="1"/>
</dbReference>
<dbReference type="Pfam" id="PF00125">
    <property type="entry name" value="Histone"/>
    <property type="match status" value="1"/>
</dbReference>
<dbReference type="PRINTS" id="PR00621">
    <property type="entry name" value="HISTONEH2B"/>
</dbReference>
<dbReference type="SMART" id="SM00427">
    <property type="entry name" value="H2B"/>
    <property type="match status" value="1"/>
</dbReference>
<dbReference type="SUPFAM" id="SSF47113">
    <property type="entry name" value="Histone-fold"/>
    <property type="match status" value="1"/>
</dbReference>
<dbReference type="PROSITE" id="PS00357">
    <property type="entry name" value="HISTONE_H2B"/>
    <property type="match status" value="1"/>
</dbReference>